<organism>
    <name type="scientific">Phoneutria nigriventer</name>
    <name type="common">Brazilian armed spider</name>
    <name type="synonym">Ctenus nigriventer</name>
    <dbReference type="NCBI Taxonomy" id="6918"/>
    <lineage>
        <taxon>Eukaryota</taxon>
        <taxon>Metazoa</taxon>
        <taxon>Ecdysozoa</taxon>
        <taxon>Arthropoda</taxon>
        <taxon>Chelicerata</taxon>
        <taxon>Arachnida</taxon>
        <taxon>Araneae</taxon>
        <taxon>Araneomorphae</taxon>
        <taxon>Entelegynae</taxon>
        <taxon>Lycosoidea</taxon>
        <taxon>Ctenidae</taxon>
        <taxon>Phoneutria</taxon>
    </lineage>
</organism>
<reference key="1">
    <citation type="journal article" date="2003" name="Toxicon">
        <title>PnTx4-3, a new insect toxin from Phoneutria nigriventer venom elicits the glutamate uptake inhibition exhibited by PhTx4 toxic fraction.</title>
        <authorList>
            <person name="Oliveira L.C."/>
            <person name="De Lima M.E."/>
            <person name="Pimenta A.M.C."/>
            <person name="Mansuelle P."/>
            <person name="Rochat H."/>
            <person name="Cordeiro M.N."/>
            <person name="Richardson M."/>
            <person name="Figueiredo S.G."/>
        </authorList>
    </citation>
    <scope>PROTEIN SEQUENCE</scope>
    <scope>FUNCTION</scope>
    <scope>SUBCELLULAR LOCATION</scope>
    <scope>MASS SPECTROMETRY</scope>
    <scope>TOXIC DOSE</scope>
    <source>
        <tissue>Venom</tissue>
    </source>
</reference>
<reference key="2">
    <citation type="journal article" date="2006" name="Comp. Biochem. Physiol.">
        <title>Comparison of the partial proteomes of the venoms of Brazilian spiders of the genus Phoneutria.</title>
        <authorList>
            <person name="Richardson M."/>
            <person name="Pimenta A.M."/>
            <person name="Bemquerer M.P."/>
            <person name="Santoro M.M."/>
            <person name="Beirao P.S."/>
            <person name="Lima M.E."/>
            <person name="Figueiredo S.G."/>
            <person name="Bloch C. Jr."/>
            <person name="Vasconcelos E.A."/>
            <person name="Campos F.A."/>
            <person name="Gomes P.C."/>
            <person name="Cordeiro M.N."/>
        </authorList>
    </citation>
    <scope>PROTEIN SEQUENCE</scope>
    <scope>SUBCELLULAR LOCATION</scope>
    <scope>MASS SPECTROMETRY</scope>
    <source>
        <tissue>Venom</tissue>
    </source>
</reference>
<accession>P84034</accession>
<protein>
    <recommendedName>
        <fullName evidence="5">Delta-ctenitoxin-Pn1b</fullName>
        <shortName evidence="5">Delta-CNTX-Pn1b</shortName>
    </recommendedName>
    <alternativeName>
        <fullName evidence="4">Neurotoxin PnTx4-3</fullName>
    </alternativeName>
</protein>
<proteinExistence type="evidence at protein level"/>
<comment type="function">
    <text evidence="1 2">Insecticidal neurotoxin that reversibly inhibits the N-methyl-D-aspartate (NMDA)-subtype of ionotropic glutamate receptor (GRIN) and inhibits inactivation of insect sodium channels (Nav) (By similarity). Inhibits glutamate uptake in rat brain synaptosomes (PubMed:14757211). In vivo, induces immediate excitatory effects when injected intrathoracically in houseflies and cockroaches (PubMed:14757211).</text>
</comment>
<comment type="subcellular location">
    <subcellularLocation>
        <location evidence="2 3">Secreted</location>
    </subcellularLocation>
</comment>
<comment type="tissue specificity">
    <text evidence="6 7">Expressed by the venom gland.</text>
</comment>
<comment type="domain">
    <text evidence="5">The presence of a 'disulfide through disulfide knot' structurally defines this protein as a knottin.</text>
</comment>
<comment type="mass spectrometry" mass="5199.49" error="0.64" method="Electrospray" evidence="2 3"/>
<comment type="mass spectrometry" mass="5199.5" method="Unknown" evidence="2 3"/>
<comment type="toxic dose">
    <text evidence="2">LD(50) is 20 ng/house fly.</text>
</comment>
<comment type="miscellaneous">
    <text evidence="2">Negative results: has no effect when intracerebroventricularly injected into mice.</text>
</comment>
<comment type="similarity">
    <text evidence="5">Belongs to the neurotoxin 03 (Tx2) family. 05 subfamily.</text>
</comment>
<evidence type="ECO:0000250" key="1">
    <source>
        <dbReference type="UniProtKB" id="P59367"/>
    </source>
</evidence>
<evidence type="ECO:0000269" key="2">
    <source>
    </source>
</evidence>
<evidence type="ECO:0000269" key="3">
    <source>
    </source>
</evidence>
<evidence type="ECO:0000303" key="4">
    <source>
    </source>
</evidence>
<evidence type="ECO:0000305" key="5"/>
<evidence type="ECO:0000305" key="6">
    <source>
    </source>
</evidence>
<evidence type="ECO:0000305" key="7">
    <source>
    </source>
</evidence>
<dbReference type="SMR" id="P84034"/>
<dbReference type="ArachnoServer" id="AS000278">
    <property type="toxin name" value="delta-ctenitoxin-Pn1b"/>
</dbReference>
<dbReference type="GO" id="GO:0005576">
    <property type="term" value="C:extracellular region"/>
    <property type="evidence" value="ECO:0007669"/>
    <property type="project" value="UniProtKB-SubCell"/>
</dbReference>
<dbReference type="GO" id="GO:0035792">
    <property type="term" value="C:host cell postsynaptic membrane"/>
    <property type="evidence" value="ECO:0007669"/>
    <property type="project" value="UniProtKB-KW"/>
</dbReference>
<dbReference type="GO" id="GO:0017080">
    <property type="term" value="F:sodium channel regulator activity"/>
    <property type="evidence" value="ECO:0007669"/>
    <property type="project" value="UniProtKB-KW"/>
</dbReference>
<dbReference type="GO" id="GO:0090729">
    <property type="term" value="F:toxin activity"/>
    <property type="evidence" value="ECO:0007669"/>
    <property type="project" value="UniProtKB-KW"/>
</dbReference>
<sequence length="48" mass="5210">CGDINAACKEDCDCCGYTTACDCYWSSSCKCREAAIVIYTAPKKKLTC</sequence>
<keyword id="KW-0903">Direct protein sequencing</keyword>
<keyword id="KW-1015">Disulfide bond</keyword>
<keyword id="KW-0872">Ion channel impairing toxin</keyword>
<keyword id="KW-1028">Ionotropic glutamate receptor inhibitor</keyword>
<keyword id="KW-0960">Knottin</keyword>
<keyword id="KW-0528">Neurotoxin</keyword>
<keyword id="KW-0629">Postsynaptic neurotoxin</keyword>
<keyword id="KW-0964">Secreted</keyword>
<keyword id="KW-0800">Toxin</keyword>
<keyword id="KW-0738">Voltage-gated sodium channel impairing toxin</keyword>
<feature type="chain" id="PRO_0000087629" description="Delta-ctenitoxin-Pn1b" evidence="2 3">
    <location>
        <begin position="1"/>
        <end position="48"/>
    </location>
</feature>
<feature type="disulfide bond" evidence="5">
    <location>
        <begin position="1"/>
        <end position="15"/>
    </location>
</feature>
<feature type="disulfide bond" evidence="5">
    <location>
        <begin position="8"/>
        <end position="21"/>
    </location>
</feature>
<feature type="disulfide bond" evidence="5">
    <location>
        <begin position="12"/>
        <end position="48"/>
    </location>
</feature>
<feature type="disulfide bond" evidence="5">
    <location>
        <begin position="14"/>
        <end position="31"/>
    </location>
</feature>
<feature type="disulfide bond" evidence="5">
    <location>
        <begin position="23"/>
        <end position="29"/>
    </location>
</feature>
<name>TX35B_PHONI</name>